<sequence>MKNGMAECSVCRSRLVSPSSKAISRAYDNYNYKIRVSSKQRALNVFLVVGDCMLVGLQPVLVYMSKVDGKFNFSPISVNFLTEIAKVIFAMVMLLFQARHQKVGEKPLLSLSTFVQAARNNMLLAVPAGLYAINNYLKFTMQLYFNPATVKMLSNLKVLVIAVLLKMIMKRRFSIIQWEALALLLIGISINQLRSLPEGATTVAVPIATGAYICTFIFVTVPSLASVYNEYALKSQYDTSIYLQNLFLYGYGAIFNFLGILGTVIYKGPGSFDILQGHSRATMFLILNNAAQGILSSFFFKYADTILKKYSSTVATIFTGIASAALFGHILTMNFLLGISIVFISMHQFFSPLSKAKDEQQNGNIELVDAKDGHRAKDSFINMAAGATEEASHRIESDDRVPLLPR</sequence>
<dbReference type="EMBL" id="AC004450">
    <property type="protein sequence ID" value="AAC64313.1"/>
    <property type="status" value="ALT_SEQ"/>
    <property type="molecule type" value="Genomic_DNA"/>
</dbReference>
<dbReference type="EMBL" id="CP002685">
    <property type="protein sequence ID" value="AEC10235.1"/>
    <property type="molecule type" value="Genomic_DNA"/>
</dbReference>
<dbReference type="EMBL" id="CP002685">
    <property type="protein sequence ID" value="AEC10236.1"/>
    <property type="molecule type" value="Genomic_DNA"/>
</dbReference>
<dbReference type="EMBL" id="AK117778">
    <property type="protein sequence ID" value="BAC42425.1"/>
    <property type="molecule type" value="mRNA"/>
</dbReference>
<dbReference type="EMBL" id="AK318703">
    <property type="protein sequence ID" value="BAH56818.1"/>
    <property type="molecule type" value="mRNA"/>
</dbReference>
<dbReference type="EMBL" id="AK176729">
    <property type="protein sequence ID" value="BAD44492.1"/>
    <property type="molecule type" value="mRNA"/>
</dbReference>
<dbReference type="EMBL" id="AK229359">
    <property type="protein sequence ID" value="BAF01222.1"/>
    <property type="molecule type" value="mRNA"/>
</dbReference>
<dbReference type="PIR" id="G84863">
    <property type="entry name" value="G84863"/>
</dbReference>
<dbReference type="RefSeq" id="NP_001118506.1">
    <molecule id="Q8GY97-4"/>
    <property type="nucleotide sequence ID" value="NM_001125034.1"/>
</dbReference>
<dbReference type="RefSeq" id="NP_181853.3">
    <molecule id="Q8GY97-1"/>
    <property type="nucleotide sequence ID" value="NM_129886.4"/>
</dbReference>
<dbReference type="SMR" id="Q8GY97"/>
<dbReference type="FunCoup" id="Q8GY97">
    <property type="interactions" value="310"/>
</dbReference>
<dbReference type="STRING" id="3702.Q8GY97"/>
<dbReference type="PaxDb" id="3702-AT2G43240.1"/>
<dbReference type="ProteomicsDB" id="222718">
    <molecule id="Q8GY97-1"/>
</dbReference>
<dbReference type="EnsemblPlants" id="AT2G43240.1">
    <molecule id="Q8GY97-1"/>
    <property type="protein sequence ID" value="AT2G43240.1"/>
    <property type="gene ID" value="AT2G43240"/>
</dbReference>
<dbReference type="EnsemblPlants" id="AT2G43240.2">
    <molecule id="Q8GY97-4"/>
    <property type="protein sequence ID" value="AT2G43240.2"/>
    <property type="gene ID" value="AT2G43240"/>
</dbReference>
<dbReference type="GeneID" id="818925"/>
<dbReference type="Gramene" id="AT2G43240.1">
    <molecule id="Q8GY97-1"/>
    <property type="protein sequence ID" value="AT2G43240.1"/>
    <property type="gene ID" value="AT2G43240"/>
</dbReference>
<dbReference type="Gramene" id="AT2G43240.2">
    <molecule id="Q8GY97-4"/>
    <property type="protein sequence ID" value="AT2G43240.2"/>
    <property type="gene ID" value="AT2G43240"/>
</dbReference>
<dbReference type="KEGG" id="ath:AT2G43240"/>
<dbReference type="Araport" id="AT2G43240"/>
<dbReference type="TAIR" id="AT2G43240"/>
<dbReference type="eggNOG" id="KOG2234">
    <property type="taxonomic scope" value="Eukaryota"/>
</dbReference>
<dbReference type="HOGENOM" id="CLU_035460_0_0_1"/>
<dbReference type="InParanoid" id="Q8GY97"/>
<dbReference type="OMA" id="SSCVVMI"/>
<dbReference type="PhylomeDB" id="Q8GY97"/>
<dbReference type="PRO" id="PR:Q8GY97"/>
<dbReference type="Proteomes" id="UP000006548">
    <property type="component" value="Chromosome 2"/>
</dbReference>
<dbReference type="ExpressionAtlas" id="Q8GY97">
    <property type="expression patterns" value="baseline and differential"/>
</dbReference>
<dbReference type="GO" id="GO:0000139">
    <property type="term" value="C:Golgi membrane"/>
    <property type="evidence" value="ECO:0007669"/>
    <property type="project" value="UniProtKB-SubCell"/>
</dbReference>
<dbReference type="GO" id="GO:0015165">
    <property type="term" value="F:pyrimidine nucleotide-sugar transmembrane transporter activity"/>
    <property type="evidence" value="ECO:0007669"/>
    <property type="project" value="InterPro"/>
</dbReference>
<dbReference type="GO" id="GO:0015136">
    <property type="term" value="F:sialic acid transmembrane transporter activity"/>
    <property type="evidence" value="ECO:0000250"/>
    <property type="project" value="UniProtKB"/>
</dbReference>
<dbReference type="GO" id="GO:0015739">
    <property type="term" value="P:sialic acid transport"/>
    <property type="evidence" value="ECO:0000250"/>
    <property type="project" value="UniProtKB"/>
</dbReference>
<dbReference type="InterPro" id="IPR007271">
    <property type="entry name" value="Nuc_sug_transpt"/>
</dbReference>
<dbReference type="PANTHER" id="PTHR10231">
    <property type="entry name" value="NUCLEOTIDE-SUGAR TRANSMEMBRANE TRANSPORTER"/>
    <property type="match status" value="1"/>
</dbReference>
<dbReference type="Pfam" id="PF04142">
    <property type="entry name" value="Nuc_sug_transp"/>
    <property type="match status" value="1"/>
</dbReference>
<dbReference type="PIRSF" id="PIRSF005799">
    <property type="entry name" value="UDP-gal_transpt"/>
    <property type="match status" value="1"/>
</dbReference>
<dbReference type="SUPFAM" id="SSF103481">
    <property type="entry name" value="Multidrug resistance efflux transporter EmrE"/>
    <property type="match status" value="1"/>
</dbReference>
<gene>
    <name type="ordered locus">At2g43240</name>
    <name type="ORF">F14B2.18</name>
</gene>
<feature type="chain" id="PRO_0000416025" description="CMP-sialic acid transporter 2">
    <location>
        <begin position="1"/>
        <end position="406"/>
    </location>
</feature>
<feature type="topological domain" description="Cytoplasmic" evidence="2">
    <location>
        <begin position="1"/>
        <end position="41"/>
    </location>
</feature>
<feature type="transmembrane region" description="Helical" evidence="2">
    <location>
        <begin position="42"/>
        <end position="62"/>
    </location>
</feature>
<feature type="topological domain" description="Lumenal" evidence="2">
    <location>
        <begin position="63"/>
        <end position="75"/>
    </location>
</feature>
<feature type="transmembrane region" description="Helical" evidence="2">
    <location>
        <begin position="76"/>
        <end position="96"/>
    </location>
</feature>
<feature type="topological domain" description="Cytoplasmic" evidence="2">
    <location>
        <begin position="97"/>
        <end position="148"/>
    </location>
</feature>
<feature type="transmembrane region" description="Helical" evidence="2">
    <location>
        <begin position="149"/>
        <end position="169"/>
    </location>
</feature>
<feature type="topological domain" description="Lumenal" evidence="2">
    <location>
        <begin position="170"/>
        <end position="172"/>
    </location>
</feature>
<feature type="transmembrane region" description="Helical" evidence="2">
    <location>
        <begin position="173"/>
        <end position="193"/>
    </location>
</feature>
<feature type="topological domain" description="Cytoplasmic" evidence="2">
    <location>
        <begin position="194"/>
        <end position="201"/>
    </location>
</feature>
<feature type="transmembrane region" description="Helical" evidence="2">
    <location>
        <begin position="202"/>
        <end position="222"/>
    </location>
</feature>
<feature type="topological domain" description="Lumenal" evidence="2">
    <location>
        <begin position="223"/>
        <end position="245"/>
    </location>
</feature>
<feature type="transmembrane region" description="Helical" evidence="2">
    <location>
        <begin position="246"/>
        <end position="266"/>
    </location>
</feature>
<feature type="topological domain" description="Cytoplasmic" evidence="2">
    <location>
        <begin position="267"/>
        <end position="282"/>
    </location>
</feature>
<feature type="transmembrane region" description="Helical" evidence="2">
    <location>
        <begin position="283"/>
        <end position="303"/>
    </location>
</feature>
<feature type="topological domain" description="Lumenal" evidence="2">
    <location>
        <begin position="304"/>
        <end position="323"/>
    </location>
</feature>
<feature type="transmembrane region" description="Helical" evidence="2">
    <location>
        <begin position="324"/>
        <end position="344"/>
    </location>
</feature>
<feature type="topological domain" description="Cytoplasmic" evidence="2">
    <location>
        <begin position="345"/>
        <end position="406"/>
    </location>
</feature>
<feature type="splice variant" id="VSP_042455" description="In isoform 3." evidence="4">
    <location>
        <begin position="1"/>
        <end position="121"/>
    </location>
</feature>
<feature type="splice variant" id="VSP_042456" description="In isoform 4." evidence="5">
    <location>
        <begin position="97"/>
        <end position="115"/>
    </location>
</feature>
<feature type="splice variant" id="VSP_042457" description="In isoform 2." evidence="3">
    <original>FFSPLSKAKDE</original>
    <variation>VMLYKPFLKPL</variation>
    <location>
        <begin position="349"/>
        <end position="359"/>
    </location>
</feature>
<feature type="splice variant" id="VSP_042458" description="In isoform 2." evidence="3">
    <location>
        <begin position="360"/>
        <end position="406"/>
    </location>
</feature>
<comment type="function">
    <text evidence="1">Sugar transporter involved in the transport of CMP-sialic acid from the cytoplasm into the Golgi.</text>
</comment>
<comment type="subcellular location">
    <subcellularLocation>
        <location evidence="1">Golgi apparatus membrane</location>
        <topology evidence="1">Multi-pass membrane protein</topology>
    </subcellularLocation>
</comment>
<comment type="alternative products">
    <event type="alternative splicing"/>
    <isoform>
        <id>Q8GY97-1</id>
        <name>1</name>
        <sequence type="displayed"/>
    </isoform>
    <isoform>
        <id>Q8GY97-2</id>
        <name>2</name>
        <sequence type="described" ref="VSP_042457 VSP_042458"/>
    </isoform>
    <isoform>
        <id>Q8GY97-3</id>
        <name>3</name>
        <sequence type="described" ref="VSP_042455"/>
    </isoform>
    <isoform>
        <id>Q8GY97-4</id>
        <name>4</name>
        <sequence type="described" ref="VSP_042456"/>
    </isoform>
</comment>
<comment type="similarity">
    <text evidence="5">Belongs to the nucleotide-sugar transporter family. CMP-Sialate:CMP antiporter (TC 2.A.7.12) subfamily.</text>
</comment>
<comment type="sequence caution" evidence="5">
    <conflict type="erroneous gene model prediction">
        <sequence resource="EMBL-CDS" id="AAC64313"/>
    </conflict>
</comment>
<keyword id="KW-0025">Alternative splicing</keyword>
<keyword id="KW-0333">Golgi apparatus</keyword>
<keyword id="KW-0472">Membrane</keyword>
<keyword id="KW-1185">Reference proteome</keyword>
<keyword id="KW-0762">Sugar transport</keyword>
<keyword id="KW-0812">Transmembrane</keyword>
<keyword id="KW-1133">Transmembrane helix</keyword>
<keyword id="KW-0813">Transport</keyword>
<accession>Q8GY97</accession>
<accession>C0Z289</accession>
<accession>F4IQ88</accession>
<accession>Q0WNS7</accession>
<accession>Q9ZW71</accession>
<name>CSTR2_ARATH</name>
<organism>
    <name type="scientific">Arabidopsis thaliana</name>
    <name type="common">Mouse-ear cress</name>
    <dbReference type="NCBI Taxonomy" id="3702"/>
    <lineage>
        <taxon>Eukaryota</taxon>
        <taxon>Viridiplantae</taxon>
        <taxon>Streptophyta</taxon>
        <taxon>Embryophyta</taxon>
        <taxon>Tracheophyta</taxon>
        <taxon>Spermatophyta</taxon>
        <taxon>Magnoliopsida</taxon>
        <taxon>eudicotyledons</taxon>
        <taxon>Gunneridae</taxon>
        <taxon>Pentapetalae</taxon>
        <taxon>rosids</taxon>
        <taxon>malvids</taxon>
        <taxon>Brassicales</taxon>
        <taxon>Brassicaceae</taxon>
        <taxon>Camelineae</taxon>
        <taxon>Arabidopsis</taxon>
    </lineage>
</organism>
<evidence type="ECO:0000250" key="1"/>
<evidence type="ECO:0000255" key="2"/>
<evidence type="ECO:0000303" key="3">
    <source>
    </source>
</evidence>
<evidence type="ECO:0000303" key="4">
    <source ref="5"/>
</evidence>
<evidence type="ECO:0000305" key="5"/>
<reference key="1">
    <citation type="journal article" date="1999" name="Nature">
        <title>Sequence and analysis of chromosome 2 of the plant Arabidopsis thaliana.</title>
        <authorList>
            <person name="Lin X."/>
            <person name="Kaul S."/>
            <person name="Rounsley S.D."/>
            <person name="Shea T.P."/>
            <person name="Benito M.-I."/>
            <person name="Town C.D."/>
            <person name="Fujii C.Y."/>
            <person name="Mason T.M."/>
            <person name="Bowman C.L."/>
            <person name="Barnstead M.E."/>
            <person name="Feldblyum T.V."/>
            <person name="Buell C.R."/>
            <person name="Ketchum K.A."/>
            <person name="Lee J.J."/>
            <person name="Ronning C.M."/>
            <person name="Koo H.L."/>
            <person name="Moffat K.S."/>
            <person name="Cronin L.A."/>
            <person name="Shen M."/>
            <person name="Pai G."/>
            <person name="Van Aken S."/>
            <person name="Umayam L."/>
            <person name="Tallon L.J."/>
            <person name="Gill J.E."/>
            <person name="Adams M.D."/>
            <person name="Carrera A.J."/>
            <person name="Creasy T.H."/>
            <person name="Goodman H.M."/>
            <person name="Somerville C.R."/>
            <person name="Copenhaver G.P."/>
            <person name="Preuss D."/>
            <person name="Nierman W.C."/>
            <person name="White O."/>
            <person name="Eisen J.A."/>
            <person name="Salzberg S.L."/>
            <person name="Fraser C.M."/>
            <person name="Venter J.C."/>
        </authorList>
    </citation>
    <scope>NUCLEOTIDE SEQUENCE [LARGE SCALE GENOMIC DNA]</scope>
    <source>
        <strain>cv. Columbia</strain>
    </source>
</reference>
<reference key="2">
    <citation type="journal article" date="2017" name="Plant J.">
        <title>Araport11: a complete reannotation of the Arabidopsis thaliana reference genome.</title>
        <authorList>
            <person name="Cheng C.Y."/>
            <person name="Krishnakumar V."/>
            <person name="Chan A.P."/>
            <person name="Thibaud-Nissen F."/>
            <person name="Schobel S."/>
            <person name="Town C.D."/>
        </authorList>
    </citation>
    <scope>GENOME REANNOTATION</scope>
    <source>
        <strain>cv. Columbia</strain>
    </source>
</reference>
<reference key="3">
    <citation type="journal article" date="2002" name="Science">
        <title>Functional annotation of a full-length Arabidopsis cDNA collection.</title>
        <authorList>
            <person name="Seki M."/>
            <person name="Narusaka M."/>
            <person name="Kamiya A."/>
            <person name="Ishida J."/>
            <person name="Satou M."/>
            <person name="Sakurai T."/>
            <person name="Nakajima M."/>
            <person name="Enju A."/>
            <person name="Akiyama K."/>
            <person name="Oono Y."/>
            <person name="Muramatsu M."/>
            <person name="Hayashizaki Y."/>
            <person name="Kawai J."/>
            <person name="Carninci P."/>
            <person name="Itoh M."/>
            <person name="Ishii Y."/>
            <person name="Arakawa T."/>
            <person name="Shibata K."/>
            <person name="Shinagawa A."/>
            <person name="Shinozaki K."/>
        </authorList>
    </citation>
    <scope>NUCLEOTIDE SEQUENCE [LARGE SCALE MRNA] (ISOFORM 1)</scope>
    <source>
        <strain>cv. Columbia</strain>
    </source>
</reference>
<reference key="4">
    <citation type="journal article" date="2009" name="DNA Res.">
        <title>Analysis of multiple occurrences of alternative splicing events in Arabidopsis thaliana using novel sequenced full-length cDNAs.</title>
        <authorList>
            <person name="Iida K."/>
            <person name="Fukami-Kobayashi K."/>
            <person name="Toyoda A."/>
            <person name="Sakaki Y."/>
            <person name="Kobayashi M."/>
            <person name="Seki M."/>
            <person name="Shinozaki K."/>
        </authorList>
    </citation>
    <scope>NUCLEOTIDE SEQUENCE [LARGE SCALE MRNA] (ISOFORM 2)</scope>
    <source>
        <strain>cv. Columbia</strain>
        <tissue>Rosette leaf</tissue>
    </source>
</reference>
<reference key="5">
    <citation type="submission" date="2006-07" db="EMBL/GenBank/DDBJ databases">
        <title>Large-scale analysis of RIKEN Arabidopsis full-length (RAFL) cDNAs.</title>
        <authorList>
            <person name="Totoki Y."/>
            <person name="Seki M."/>
            <person name="Ishida J."/>
            <person name="Nakajima M."/>
            <person name="Enju A."/>
            <person name="Kamiya A."/>
            <person name="Narusaka M."/>
            <person name="Shin-i T."/>
            <person name="Nakagawa M."/>
            <person name="Sakamoto N."/>
            <person name="Oishi K."/>
            <person name="Kohara Y."/>
            <person name="Kobayashi M."/>
            <person name="Toyoda A."/>
            <person name="Sakaki Y."/>
            <person name="Sakurai T."/>
            <person name="Iida K."/>
            <person name="Akiyama K."/>
            <person name="Satou M."/>
            <person name="Toyoda T."/>
            <person name="Konagaya A."/>
            <person name="Carninci P."/>
            <person name="Kawai J."/>
            <person name="Hayashizaki Y."/>
            <person name="Shinozaki K."/>
        </authorList>
    </citation>
    <scope>NUCLEOTIDE SEQUENCE [LARGE SCALE MRNA] (ISOFORMS 1 AND 3)</scope>
    <source>
        <strain>cv. Columbia</strain>
    </source>
</reference>
<reference key="6">
    <citation type="journal article" date="2005" name="Glycobiology">
        <title>Molecular cloning of two Arabidopsis UDP-galactose transporters by complementation of a deficient Chinese hamster ovary cell line.</title>
        <authorList>
            <person name="Bakker H."/>
            <person name="Routier F."/>
            <person name="Oelmann S."/>
            <person name="Jordi W."/>
            <person name="Lommen A."/>
            <person name="Gerardy-Schahn R."/>
            <person name="Bosch D."/>
        </authorList>
    </citation>
    <scope>GENE FAMILY</scope>
</reference>
<reference key="7">
    <citation type="journal article" date="2014" name="Proc. Natl. Acad. Sci. U.S.A.">
        <title>The Golgi localized bifunctional UDP-rhamnose/UDP-galactose transporter family of Arabidopsis.</title>
        <authorList>
            <person name="Rautengarten C."/>
            <person name="Ebert B."/>
            <person name="Moreno I."/>
            <person name="Temple H."/>
            <person name="Herter T."/>
            <person name="Link B."/>
            <person name="Donas-Cofre D."/>
            <person name="Moreno A."/>
            <person name="Saez-Aguayo S."/>
            <person name="Blanco F."/>
            <person name="Mortimer J.C."/>
            <person name="Schultink A."/>
            <person name="Reiter W.D."/>
            <person name="Dupree P."/>
            <person name="Pauly M."/>
            <person name="Heazlewood J.L."/>
            <person name="Scheller H.V."/>
            <person name="Orellana A."/>
        </authorList>
    </citation>
    <scope>GENE FAMILY</scope>
</reference>
<protein>
    <recommendedName>
        <fullName>CMP-sialic acid transporter 2</fullName>
        <shortName>CMP-SA-Tr 2</shortName>
        <shortName>CMP-Sia-Tr 2</shortName>
    </recommendedName>
</protein>
<proteinExistence type="evidence at transcript level"/>